<proteinExistence type="inferred from homology"/>
<feature type="chain" id="PRO_0000211768" description="Pyrimidine/purine nucleoside phosphorylase">
    <location>
        <begin position="1"/>
        <end position="106"/>
    </location>
</feature>
<evidence type="ECO:0000255" key="1">
    <source>
        <dbReference type="HAMAP-Rule" id="MF_01537"/>
    </source>
</evidence>
<organism>
    <name type="scientific">Leptospira interrogans serogroup Icterohaemorrhagiae serovar copenhageni (strain Fiocruz L1-130)</name>
    <dbReference type="NCBI Taxonomy" id="267671"/>
    <lineage>
        <taxon>Bacteria</taxon>
        <taxon>Pseudomonadati</taxon>
        <taxon>Spirochaetota</taxon>
        <taxon>Spirochaetia</taxon>
        <taxon>Leptospirales</taxon>
        <taxon>Leptospiraceae</taxon>
        <taxon>Leptospira</taxon>
    </lineage>
</organism>
<dbReference type="EC" id="2.4.2.1" evidence="1"/>
<dbReference type="EC" id="2.4.2.2" evidence="1"/>
<dbReference type="EMBL" id="AE016823">
    <property type="protein sequence ID" value="AAS71240.1"/>
    <property type="molecule type" value="Genomic_DNA"/>
</dbReference>
<dbReference type="RefSeq" id="WP_000077234.1">
    <property type="nucleotide sequence ID" value="NC_005823.1"/>
</dbReference>
<dbReference type="SMR" id="Q72NZ6"/>
<dbReference type="KEGG" id="lic:LIC_12681"/>
<dbReference type="HOGENOM" id="CLU_157874_1_0_12"/>
<dbReference type="Proteomes" id="UP000007037">
    <property type="component" value="Chromosome I"/>
</dbReference>
<dbReference type="GO" id="GO:0005829">
    <property type="term" value="C:cytosol"/>
    <property type="evidence" value="ECO:0007669"/>
    <property type="project" value="TreeGrafter"/>
</dbReference>
<dbReference type="GO" id="GO:0047975">
    <property type="term" value="F:guanosine phosphorylase activity"/>
    <property type="evidence" value="ECO:0007669"/>
    <property type="project" value="UniProtKB-EC"/>
</dbReference>
<dbReference type="GO" id="GO:0004731">
    <property type="term" value="F:purine-nucleoside phosphorylase activity"/>
    <property type="evidence" value="ECO:0007669"/>
    <property type="project" value="UniProtKB-UniRule"/>
</dbReference>
<dbReference type="GO" id="GO:0009032">
    <property type="term" value="F:thymidine phosphorylase activity"/>
    <property type="evidence" value="ECO:0007669"/>
    <property type="project" value="UniProtKB-EC"/>
</dbReference>
<dbReference type="GO" id="GO:0004850">
    <property type="term" value="F:uridine phosphorylase activity"/>
    <property type="evidence" value="ECO:0007669"/>
    <property type="project" value="UniProtKB-EC"/>
</dbReference>
<dbReference type="CDD" id="cd20296">
    <property type="entry name" value="cupin_PpnP-like"/>
    <property type="match status" value="1"/>
</dbReference>
<dbReference type="FunFam" id="2.60.120.10:FF:000016">
    <property type="entry name" value="Pyrimidine/purine nucleoside phosphorylase"/>
    <property type="match status" value="1"/>
</dbReference>
<dbReference type="Gene3D" id="2.60.120.10">
    <property type="entry name" value="Jelly Rolls"/>
    <property type="match status" value="1"/>
</dbReference>
<dbReference type="HAMAP" id="MF_01537">
    <property type="entry name" value="Nucleos_phosphorylase_PpnP"/>
    <property type="match status" value="1"/>
</dbReference>
<dbReference type="InterPro" id="IPR009664">
    <property type="entry name" value="Ppnp"/>
</dbReference>
<dbReference type="InterPro" id="IPR014710">
    <property type="entry name" value="RmlC-like_jellyroll"/>
</dbReference>
<dbReference type="InterPro" id="IPR011051">
    <property type="entry name" value="RmlC_Cupin_sf"/>
</dbReference>
<dbReference type="PANTHER" id="PTHR36540">
    <property type="entry name" value="PYRIMIDINE/PURINE NUCLEOSIDE PHOSPHORYLASE"/>
    <property type="match status" value="1"/>
</dbReference>
<dbReference type="PANTHER" id="PTHR36540:SF1">
    <property type="entry name" value="PYRIMIDINE_PURINE NUCLEOSIDE PHOSPHORYLASE"/>
    <property type="match status" value="1"/>
</dbReference>
<dbReference type="Pfam" id="PF06865">
    <property type="entry name" value="Ppnp"/>
    <property type="match status" value="1"/>
</dbReference>
<dbReference type="SUPFAM" id="SSF51182">
    <property type="entry name" value="RmlC-like cupins"/>
    <property type="match status" value="1"/>
</dbReference>
<gene>
    <name evidence="1" type="primary">ppnP</name>
    <name type="ordered locus">LIC_12681</name>
</gene>
<keyword id="KW-0328">Glycosyltransferase</keyword>
<keyword id="KW-0808">Transferase</keyword>
<accession>Q72NZ6</accession>
<reference key="1">
    <citation type="journal article" date="2004" name="J. Bacteriol.">
        <title>Comparative genomics of two Leptospira interrogans serovars reveals novel insights into physiology and pathogenesis.</title>
        <authorList>
            <person name="Nascimento A.L.T.O."/>
            <person name="Ko A.I."/>
            <person name="Martins E.A.L."/>
            <person name="Monteiro-Vitorello C.B."/>
            <person name="Ho P.L."/>
            <person name="Haake D.A."/>
            <person name="Verjovski-Almeida S."/>
            <person name="Hartskeerl R.A."/>
            <person name="Marques M.V."/>
            <person name="Oliveira M.C."/>
            <person name="Menck C.F.M."/>
            <person name="Leite L.C.C."/>
            <person name="Carrer H."/>
            <person name="Coutinho L.L."/>
            <person name="Degrave W.M."/>
            <person name="Dellagostin O.A."/>
            <person name="El-Dorry H."/>
            <person name="Ferro E.S."/>
            <person name="Ferro M.I.T."/>
            <person name="Furlan L.R."/>
            <person name="Gamberini M."/>
            <person name="Giglioti E.A."/>
            <person name="Goes-Neto A."/>
            <person name="Goldman G.H."/>
            <person name="Goldman M.H.S."/>
            <person name="Harakava R."/>
            <person name="Jeronimo S.M.B."/>
            <person name="Junqueira-de-Azevedo I.L.M."/>
            <person name="Kimura E.T."/>
            <person name="Kuramae E.E."/>
            <person name="Lemos E.G.M."/>
            <person name="Lemos M.V.F."/>
            <person name="Marino C.L."/>
            <person name="Nunes L.R."/>
            <person name="de Oliveira R.C."/>
            <person name="Pereira G.G."/>
            <person name="Reis M.S."/>
            <person name="Schriefer A."/>
            <person name="Siqueira W.J."/>
            <person name="Sommer P."/>
            <person name="Tsai S.M."/>
            <person name="Simpson A.J.G."/>
            <person name="Ferro J.A."/>
            <person name="Camargo L.E.A."/>
            <person name="Kitajima J.P."/>
            <person name="Setubal J.C."/>
            <person name="Van Sluys M.A."/>
        </authorList>
    </citation>
    <scope>NUCLEOTIDE SEQUENCE [LARGE SCALE GENOMIC DNA]</scope>
    <source>
        <strain>Fiocruz L1-130</strain>
    </source>
</reference>
<name>PPNP_LEPIC</name>
<comment type="function">
    <text evidence="1">Catalyzes the phosphorolysis of diverse nucleosides, yielding D-ribose 1-phosphate and the respective free bases. Can use uridine, adenosine, guanosine, cytidine, thymidine, inosine and xanthosine as substrates. Also catalyzes the reverse reactions.</text>
</comment>
<comment type="catalytic activity">
    <reaction evidence="1">
        <text>a purine D-ribonucleoside + phosphate = a purine nucleobase + alpha-D-ribose 1-phosphate</text>
        <dbReference type="Rhea" id="RHEA:19805"/>
        <dbReference type="ChEBI" id="CHEBI:26386"/>
        <dbReference type="ChEBI" id="CHEBI:43474"/>
        <dbReference type="ChEBI" id="CHEBI:57720"/>
        <dbReference type="ChEBI" id="CHEBI:142355"/>
        <dbReference type="EC" id="2.4.2.1"/>
    </reaction>
</comment>
<comment type="catalytic activity">
    <reaction evidence="1">
        <text>adenosine + phosphate = alpha-D-ribose 1-phosphate + adenine</text>
        <dbReference type="Rhea" id="RHEA:27642"/>
        <dbReference type="ChEBI" id="CHEBI:16335"/>
        <dbReference type="ChEBI" id="CHEBI:16708"/>
        <dbReference type="ChEBI" id="CHEBI:43474"/>
        <dbReference type="ChEBI" id="CHEBI:57720"/>
        <dbReference type="EC" id="2.4.2.1"/>
    </reaction>
</comment>
<comment type="catalytic activity">
    <reaction evidence="1">
        <text>cytidine + phosphate = cytosine + alpha-D-ribose 1-phosphate</text>
        <dbReference type="Rhea" id="RHEA:52540"/>
        <dbReference type="ChEBI" id="CHEBI:16040"/>
        <dbReference type="ChEBI" id="CHEBI:17562"/>
        <dbReference type="ChEBI" id="CHEBI:43474"/>
        <dbReference type="ChEBI" id="CHEBI:57720"/>
        <dbReference type="EC" id="2.4.2.2"/>
    </reaction>
</comment>
<comment type="catalytic activity">
    <reaction evidence="1">
        <text>guanosine + phosphate = alpha-D-ribose 1-phosphate + guanine</text>
        <dbReference type="Rhea" id="RHEA:13233"/>
        <dbReference type="ChEBI" id="CHEBI:16235"/>
        <dbReference type="ChEBI" id="CHEBI:16750"/>
        <dbReference type="ChEBI" id="CHEBI:43474"/>
        <dbReference type="ChEBI" id="CHEBI:57720"/>
        <dbReference type="EC" id="2.4.2.1"/>
    </reaction>
</comment>
<comment type="catalytic activity">
    <reaction evidence="1">
        <text>inosine + phosphate = alpha-D-ribose 1-phosphate + hypoxanthine</text>
        <dbReference type="Rhea" id="RHEA:27646"/>
        <dbReference type="ChEBI" id="CHEBI:17368"/>
        <dbReference type="ChEBI" id="CHEBI:17596"/>
        <dbReference type="ChEBI" id="CHEBI:43474"/>
        <dbReference type="ChEBI" id="CHEBI:57720"/>
        <dbReference type="EC" id="2.4.2.1"/>
    </reaction>
</comment>
<comment type="catalytic activity">
    <reaction evidence="1">
        <text>thymidine + phosphate = 2-deoxy-alpha-D-ribose 1-phosphate + thymine</text>
        <dbReference type="Rhea" id="RHEA:16037"/>
        <dbReference type="ChEBI" id="CHEBI:17748"/>
        <dbReference type="ChEBI" id="CHEBI:17821"/>
        <dbReference type="ChEBI" id="CHEBI:43474"/>
        <dbReference type="ChEBI" id="CHEBI:57259"/>
        <dbReference type="EC" id="2.4.2.2"/>
    </reaction>
</comment>
<comment type="catalytic activity">
    <reaction evidence="1">
        <text>uridine + phosphate = alpha-D-ribose 1-phosphate + uracil</text>
        <dbReference type="Rhea" id="RHEA:24388"/>
        <dbReference type="ChEBI" id="CHEBI:16704"/>
        <dbReference type="ChEBI" id="CHEBI:17568"/>
        <dbReference type="ChEBI" id="CHEBI:43474"/>
        <dbReference type="ChEBI" id="CHEBI:57720"/>
        <dbReference type="EC" id="2.4.2.2"/>
    </reaction>
</comment>
<comment type="catalytic activity">
    <reaction evidence="1">
        <text>xanthosine + phosphate = alpha-D-ribose 1-phosphate + xanthine</text>
        <dbReference type="Rhea" id="RHEA:27638"/>
        <dbReference type="ChEBI" id="CHEBI:17712"/>
        <dbReference type="ChEBI" id="CHEBI:18107"/>
        <dbReference type="ChEBI" id="CHEBI:43474"/>
        <dbReference type="ChEBI" id="CHEBI:57720"/>
        <dbReference type="EC" id="2.4.2.1"/>
    </reaction>
</comment>
<comment type="similarity">
    <text evidence="1">Belongs to the nucleoside phosphorylase PpnP family.</text>
</comment>
<sequence>MSQFENVTIIKKANVYYDGKVTSRSILFQDGSKKTLGILMPGQYDFGTDEKEIMEILDGELLVKLPGQEVWSEIKGGQSFEVPAKSRFQMDVKKISDYCCSYIQNS</sequence>
<protein>
    <recommendedName>
        <fullName evidence="1">Pyrimidine/purine nucleoside phosphorylase</fullName>
        <ecNumber evidence="1">2.4.2.1</ecNumber>
        <ecNumber evidence="1">2.4.2.2</ecNumber>
    </recommendedName>
    <alternativeName>
        <fullName evidence="1">Adenosine phosphorylase</fullName>
    </alternativeName>
    <alternativeName>
        <fullName evidence="1">Cytidine phosphorylase</fullName>
    </alternativeName>
    <alternativeName>
        <fullName evidence="1">Guanosine phosphorylase</fullName>
    </alternativeName>
    <alternativeName>
        <fullName evidence="1">Inosine phosphorylase</fullName>
    </alternativeName>
    <alternativeName>
        <fullName evidence="1">Thymidine phosphorylase</fullName>
    </alternativeName>
    <alternativeName>
        <fullName evidence="1">Uridine phosphorylase</fullName>
    </alternativeName>
    <alternativeName>
        <fullName evidence="1">Xanthosine phosphorylase</fullName>
    </alternativeName>
</protein>